<proteinExistence type="inferred from homology"/>
<dbReference type="EC" id="2.4.2.9" evidence="1"/>
<dbReference type="EMBL" id="CP000605">
    <property type="protein sequence ID" value="ACD99034.1"/>
    <property type="molecule type" value="Genomic_DNA"/>
</dbReference>
<dbReference type="RefSeq" id="WP_007053093.1">
    <property type="nucleotide sequence ID" value="NZ_AABM02000009.1"/>
</dbReference>
<dbReference type="SMR" id="B3DPH5"/>
<dbReference type="GeneID" id="69578995"/>
<dbReference type="KEGG" id="blj:BLD_1589"/>
<dbReference type="HOGENOM" id="CLU_067096_2_3_11"/>
<dbReference type="UniPathway" id="UPA00574">
    <property type="reaction ID" value="UER00636"/>
</dbReference>
<dbReference type="Proteomes" id="UP000002419">
    <property type="component" value="Chromosome"/>
</dbReference>
<dbReference type="GO" id="GO:0005525">
    <property type="term" value="F:GTP binding"/>
    <property type="evidence" value="ECO:0007669"/>
    <property type="project" value="UniProtKB-KW"/>
</dbReference>
<dbReference type="GO" id="GO:0000287">
    <property type="term" value="F:magnesium ion binding"/>
    <property type="evidence" value="ECO:0007669"/>
    <property type="project" value="UniProtKB-UniRule"/>
</dbReference>
<dbReference type="GO" id="GO:0004845">
    <property type="term" value="F:uracil phosphoribosyltransferase activity"/>
    <property type="evidence" value="ECO:0007669"/>
    <property type="project" value="UniProtKB-UniRule"/>
</dbReference>
<dbReference type="GO" id="GO:0044206">
    <property type="term" value="P:UMP salvage"/>
    <property type="evidence" value="ECO:0007669"/>
    <property type="project" value="UniProtKB-UniRule"/>
</dbReference>
<dbReference type="GO" id="GO:0006223">
    <property type="term" value="P:uracil salvage"/>
    <property type="evidence" value="ECO:0007669"/>
    <property type="project" value="InterPro"/>
</dbReference>
<dbReference type="CDD" id="cd06223">
    <property type="entry name" value="PRTases_typeI"/>
    <property type="match status" value="1"/>
</dbReference>
<dbReference type="FunFam" id="3.40.50.2020:FF:000003">
    <property type="entry name" value="Uracil phosphoribosyltransferase"/>
    <property type="match status" value="1"/>
</dbReference>
<dbReference type="Gene3D" id="3.40.50.2020">
    <property type="match status" value="1"/>
</dbReference>
<dbReference type="HAMAP" id="MF_01218_B">
    <property type="entry name" value="Upp_B"/>
    <property type="match status" value="1"/>
</dbReference>
<dbReference type="InterPro" id="IPR000836">
    <property type="entry name" value="PRibTrfase_dom"/>
</dbReference>
<dbReference type="InterPro" id="IPR029057">
    <property type="entry name" value="PRTase-like"/>
</dbReference>
<dbReference type="InterPro" id="IPR034332">
    <property type="entry name" value="Upp_B"/>
</dbReference>
<dbReference type="InterPro" id="IPR050054">
    <property type="entry name" value="UPRTase/APRTase"/>
</dbReference>
<dbReference type="InterPro" id="IPR005765">
    <property type="entry name" value="Ura_phspho_trans"/>
</dbReference>
<dbReference type="NCBIfam" id="NF001097">
    <property type="entry name" value="PRK00129.1"/>
    <property type="match status" value="1"/>
</dbReference>
<dbReference type="NCBIfam" id="TIGR01091">
    <property type="entry name" value="upp"/>
    <property type="match status" value="1"/>
</dbReference>
<dbReference type="PANTHER" id="PTHR32315">
    <property type="entry name" value="ADENINE PHOSPHORIBOSYLTRANSFERASE"/>
    <property type="match status" value="1"/>
</dbReference>
<dbReference type="PANTHER" id="PTHR32315:SF4">
    <property type="entry name" value="URACIL PHOSPHORIBOSYLTRANSFERASE, CHLOROPLASTIC"/>
    <property type="match status" value="1"/>
</dbReference>
<dbReference type="Pfam" id="PF14681">
    <property type="entry name" value="UPRTase"/>
    <property type="match status" value="1"/>
</dbReference>
<dbReference type="SUPFAM" id="SSF53271">
    <property type="entry name" value="PRTase-like"/>
    <property type="match status" value="1"/>
</dbReference>
<gene>
    <name evidence="1" type="primary">upp</name>
    <name type="ordered locus">BLD_1589</name>
</gene>
<keyword id="KW-0021">Allosteric enzyme</keyword>
<keyword id="KW-0328">Glycosyltransferase</keyword>
<keyword id="KW-0342">GTP-binding</keyword>
<keyword id="KW-0460">Magnesium</keyword>
<keyword id="KW-0547">Nucleotide-binding</keyword>
<keyword id="KW-0808">Transferase</keyword>
<sequence>MELHVLNHPLVEHKLTVLRDKNTPSSTFRELVSELVMLEAYEATRNLSVVAAPIETPVAPMTGKKLASPRPIIVPVLRAGLGMLDGMTRLIPTAEVGFLGMKRDEEHPTQQVTYANRLPEDLSGRQCFLIDPMLATGGTLVAATHYLAERGAKDVTAINIIAAPEGIKYVEEHIDPSIDFKVVVCAVDERLNDKCYIVPGLGDAGDRLYGVID</sequence>
<reference key="1">
    <citation type="journal article" date="2008" name="BMC Genomics">
        <title>Comparative genomic analysis of the gut bacterium Bifidobacterium longum reveals loci susceptible to deletion during pure culture growth.</title>
        <authorList>
            <person name="Lee J.H."/>
            <person name="Karamychev V.N."/>
            <person name="Kozyavkin S.A."/>
            <person name="Mills D."/>
            <person name="Pavlov A.R."/>
            <person name="Pavlova N.V."/>
            <person name="Polouchine N.N."/>
            <person name="Richardson P.M."/>
            <person name="Shakhova V.V."/>
            <person name="Slesarev A.I."/>
            <person name="Weimer B."/>
            <person name="O'Sullivan D.J."/>
        </authorList>
    </citation>
    <scope>NUCLEOTIDE SEQUENCE [LARGE SCALE GENOMIC DNA]</scope>
    <source>
        <strain>DJO10A</strain>
    </source>
</reference>
<evidence type="ECO:0000255" key="1">
    <source>
        <dbReference type="HAMAP-Rule" id="MF_01218"/>
    </source>
</evidence>
<accession>B3DPH5</accession>
<organism>
    <name type="scientific">Bifidobacterium longum (strain DJO10A)</name>
    <dbReference type="NCBI Taxonomy" id="205913"/>
    <lineage>
        <taxon>Bacteria</taxon>
        <taxon>Bacillati</taxon>
        <taxon>Actinomycetota</taxon>
        <taxon>Actinomycetes</taxon>
        <taxon>Bifidobacteriales</taxon>
        <taxon>Bifidobacteriaceae</taxon>
        <taxon>Bifidobacterium</taxon>
    </lineage>
</organism>
<comment type="function">
    <text evidence="1">Catalyzes the conversion of uracil and 5-phospho-alpha-D-ribose 1-diphosphate (PRPP) to UMP and diphosphate.</text>
</comment>
<comment type="catalytic activity">
    <reaction evidence="1">
        <text>UMP + diphosphate = 5-phospho-alpha-D-ribose 1-diphosphate + uracil</text>
        <dbReference type="Rhea" id="RHEA:13017"/>
        <dbReference type="ChEBI" id="CHEBI:17568"/>
        <dbReference type="ChEBI" id="CHEBI:33019"/>
        <dbReference type="ChEBI" id="CHEBI:57865"/>
        <dbReference type="ChEBI" id="CHEBI:58017"/>
        <dbReference type="EC" id="2.4.2.9"/>
    </reaction>
</comment>
<comment type="cofactor">
    <cofactor evidence="1">
        <name>Mg(2+)</name>
        <dbReference type="ChEBI" id="CHEBI:18420"/>
    </cofactor>
    <text evidence="1">Binds 1 Mg(2+) ion per subunit. The magnesium is bound as Mg-PRPP.</text>
</comment>
<comment type="activity regulation">
    <text evidence="1">Allosterically activated by GTP.</text>
</comment>
<comment type="pathway">
    <text evidence="1">Pyrimidine metabolism; UMP biosynthesis via salvage pathway; UMP from uracil: step 1/1.</text>
</comment>
<comment type="similarity">
    <text evidence="1">Belongs to the UPRTase family.</text>
</comment>
<name>UPP_BIFLD</name>
<protein>
    <recommendedName>
        <fullName evidence="1">Uracil phosphoribosyltransferase</fullName>
        <ecNumber evidence="1">2.4.2.9</ecNumber>
    </recommendedName>
    <alternativeName>
        <fullName evidence="1">UMP pyrophosphorylase</fullName>
    </alternativeName>
    <alternativeName>
        <fullName evidence="1">UPRTase</fullName>
    </alternativeName>
</protein>
<feature type="chain" id="PRO_1000139098" description="Uracil phosphoribosyltransferase">
    <location>
        <begin position="1"/>
        <end position="213"/>
    </location>
</feature>
<feature type="binding site" evidence="1">
    <location>
        <position position="78"/>
    </location>
    <ligand>
        <name>5-phospho-alpha-D-ribose 1-diphosphate</name>
        <dbReference type="ChEBI" id="CHEBI:58017"/>
    </ligand>
</feature>
<feature type="binding site" evidence="1">
    <location>
        <position position="103"/>
    </location>
    <ligand>
        <name>5-phospho-alpha-D-ribose 1-diphosphate</name>
        <dbReference type="ChEBI" id="CHEBI:58017"/>
    </ligand>
</feature>
<feature type="binding site" evidence="1">
    <location>
        <begin position="131"/>
        <end position="139"/>
    </location>
    <ligand>
        <name>5-phospho-alpha-D-ribose 1-diphosphate</name>
        <dbReference type="ChEBI" id="CHEBI:58017"/>
    </ligand>
</feature>
<feature type="binding site" evidence="1">
    <location>
        <position position="197"/>
    </location>
    <ligand>
        <name>uracil</name>
        <dbReference type="ChEBI" id="CHEBI:17568"/>
    </ligand>
</feature>
<feature type="binding site" evidence="1">
    <location>
        <begin position="202"/>
        <end position="204"/>
    </location>
    <ligand>
        <name>uracil</name>
        <dbReference type="ChEBI" id="CHEBI:17568"/>
    </ligand>
</feature>
<feature type="binding site" evidence="1">
    <location>
        <position position="203"/>
    </location>
    <ligand>
        <name>5-phospho-alpha-D-ribose 1-diphosphate</name>
        <dbReference type="ChEBI" id="CHEBI:58017"/>
    </ligand>
</feature>